<organism>
    <name type="scientific">Mycoplasmoides gallisepticum (strain R(low / passage 15 / clone 2))</name>
    <name type="common">Mycoplasma gallisepticum</name>
    <dbReference type="NCBI Taxonomy" id="710127"/>
    <lineage>
        <taxon>Bacteria</taxon>
        <taxon>Bacillati</taxon>
        <taxon>Mycoplasmatota</taxon>
        <taxon>Mycoplasmoidales</taxon>
        <taxon>Mycoplasmoidaceae</taxon>
        <taxon>Mycoplasmoides</taxon>
    </lineage>
</organism>
<gene>
    <name evidence="1" type="primary">cmk</name>
    <name type="ordered locus">MYCGA1590</name>
    <name type="ORF">MGA_0900</name>
</gene>
<protein>
    <recommendedName>
        <fullName evidence="1">Cytidylate kinase</fullName>
        <shortName evidence="1">CK</shortName>
        <ecNumber evidence="1">2.7.4.25</ecNumber>
    </recommendedName>
    <alternativeName>
        <fullName evidence="1">Cytidine monophosphate kinase</fullName>
        <shortName evidence="1">CMP kinase</shortName>
    </alternativeName>
</protein>
<evidence type="ECO:0000255" key="1">
    <source>
        <dbReference type="HAMAP-Rule" id="MF_00238"/>
    </source>
</evidence>
<reference key="1">
    <citation type="journal article" date="2003" name="Microbiology">
        <title>The complete genome sequence of the avian pathogen Mycoplasma gallisepticum strain R(low).</title>
        <authorList>
            <person name="Papazisi L."/>
            <person name="Gorton T.S."/>
            <person name="Kutish G."/>
            <person name="Markham P.F."/>
            <person name="Browning G.F."/>
            <person name="Nguyen D.K."/>
            <person name="Swartzell S."/>
            <person name="Madan A."/>
            <person name="Mahairas G."/>
            <person name="Geary S.J."/>
        </authorList>
    </citation>
    <scope>NUCLEOTIDE SEQUENCE [LARGE SCALE GENOMIC DNA]</scope>
    <source>
        <strain>R(low / passage 15 / clone 2)</strain>
    </source>
</reference>
<keyword id="KW-0067">ATP-binding</keyword>
<keyword id="KW-0963">Cytoplasm</keyword>
<keyword id="KW-0418">Kinase</keyword>
<keyword id="KW-0547">Nucleotide-binding</keyword>
<keyword id="KW-1185">Reference proteome</keyword>
<keyword id="KW-0808">Transferase</keyword>
<sequence length="224" mass="25184">MTKQINSQQIAIDGPAGSGKSTVAKLVAQRLGFDYLSTGKIFRAFYYLIKENNWSIDQLISNFNKYECAFNGDQVVINKENISQLLNDPTISKGASEIAQDPKIRAYALSLQQDYANKKPVVMDGRDITSVVLPNAILKVFLTASAQQRAIRRIKQLNLELNKATLEQFTNEIQQRDDNDTNRKLAPLMIVKDAIVIDSDQLSIEQVVDKIISLYKQRLGVNYA</sequence>
<comment type="catalytic activity">
    <reaction evidence="1">
        <text>CMP + ATP = CDP + ADP</text>
        <dbReference type="Rhea" id="RHEA:11600"/>
        <dbReference type="ChEBI" id="CHEBI:30616"/>
        <dbReference type="ChEBI" id="CHEBI:58069"/>
        <dbReference type="ChEBI" id="CHEBI:60377"/>
        <dbReference type="ChEBI" id="CHEBI:456216"/>
        <dbReference type="EC" id="2.7.4.25"/>
    </reaction>
</comment>
<comment type="catalytic activity">
    <reaction evidence="1">
        <text>dCMP + ATP = dCDP + ADP</text>
        <dbReference type="Rhea" id="RHEA:25094"/>
        <dbReference type="ChEBI" id="CHEBI:30616"/>
        <dbReference type="ChEBI" id="CHEBI:57566"/>
        <dbReference type="ChEBI" id="CHEBI:58593"/>
        <dbReference type="ChEBI" id="CHEBI:456216"/>
        <dbReference type="EC" id="2.7.4.25"/>
    </reaction>
</comment>
<comment type="subcellular location">
    <subcellularLocation>
        <location evidence="1">Cytoplasm</location>
    </subcellularLocation>
</comment>
<comment type="similarity">
    <text evidence="1">Belongs to the cytidylate kinase family. Type 1 subfamily.</text>
</comment>
<feature type="chain" id="PRO_0000131935" description="Cytidylate kinase">
    <location>
        <begin position="1"/>
        <end position="224"/>
    </location>
</feature>
<feature type="binding site" evidence="1">
    <location>
        <begin position="14"/>
        <end position="22"/>
    </location>
    <ligand>
        <name>ATP</name>
        <dbReference type="ChEBI" id="CHEBI:30616"/>
    </ligand>
</feature>
<dbReference type="EC" id="2.7.4.25" evidence="1"/>
<dbReference type="EMBL" id="AE015450">
    <property type="protein sequence ID" value="AAP56509.2"/>
    <property type="molecule type" value="Genomic_DNA"/>
</dbReference>
<dbReference type="RefSeq" id="WP_011113391.1">
    <property type="nucleotide sequence ID" value="NC_004829.2"/>
</dbReference>
<dbReference type="SMR" id="Q7NBV1"/>
<dbReference type="GeneID" id="93509978"/>
<dbReference type="KEGG" id="mga:MGA_0900"/>
<dbReference type="PATRIC" id="fig|233150.7.peg.176"/>
<dbReference type="HOGENOM" id="CLU_079959_0_2_14"/>
<dbReference type="OrthoDB" id="9807434at2"/>
<dbReference type="Proteomes" id="UP000001418">
    <property type="component" value="Chromosome"/>
</dbReference>
<dbReference type="GO" id="GO:0005829">
    <property type="term" value="C:cytosol"/>
    <property type="evidence" value="ECO:0007669"/>
    <property type="project" value="TreeGrafter"/>
</dbReference>
<dbReference type="GO" id="GO:0005524">
    <property type="term" value="F:ATP binding"/>
    <property type="evidence" value="ECO:0007669"/>
    <property type="project" value="UniProtKB-UniRule"/>
</dbReference>
<dbReference type="GO" id="GO:0036430">
    <property type="term" value="F:CMP kinase activity"/>
    <property type="evidence" value="ECO:0007669"/>
    <property type="project" value="RHEA"/>
</dbReference>
<dbReference type="GO" id="GO:0036431">
    <property type="term" value="F:dCMP kinase activity"/>
    <property type="evidence" value="ECO:0007669"/>
    <property type="project" value="RHEA"/>
</dbReference>
<dbReference type="GO" id="GO:0015949">
    <property type="term" value="P:nucleobase-containing small molecule interconversion"/>
    <property type="evidence" value="ECO:0007669"/>
    <property type="project" value="TreeGrafter"/>
</dbReference>
<dbReference type="GO" id="GO:0006220">
    <property type="term" value="P:pyrimidine nucleotide metabolic process"/>
    <property type="evidence" value="ECO:0007669"/>
    <property type="project" value="UniProtKB-UniRule"/>
</dbReference>
<dbReference type="CDD" id="cd02020">
    <property type="entry name" value="CMPK"/>
    <property type="match status" value="1"/>
</dbReference>
<dbReference type="Gene3D" id="3.40.50.300">
    <property type="entry name" value="P-loop containing nucleotide triphosphate hydrolases"/>
    <property type="match status" value="1"/>
</dbReference>
<dbReference type="HAMAP" id="MF_00238">
    <property type="entry name" value="Cytidyl_kinase_type1"/>
    <property type="match status" value="1"/>
</dbReference>
<dbReference type="InterPro" id="IPR003136">
    <property type="entry name" value="Cytidylate_kin"/>
</dbReference>
<dbReference type="InterPro" id="IPR011994">
    <property type="entry name" value="Cytidylate_kinase_dom"/>
</dbReference>
<dbReference type="InterPro" id="IPR027417">
    <property type="entry name" value="P-loop_NTPase"/>
</dbReference>
<dbReference type="NCBIfam" id="TIGR00017">
    <property type="entry name" value="cmk"/>
    <property type="match status" value="1"/>
</dbReference>
<dbReference type="PANTHER" id="PTHR21299:SF2">
    <property type="entry name" value="CYTIDYLATE KINASE"/>
    <property type="match status" value="1"/>
</dbReference>
<dbReference type="PANTHER" id="PTHR21299">
    <property type="entry name" value="CYTIDYLATE KINASE/PANTOATE-BETA-ALANINE LIGASE"/>
    <property type="match status" value="1"/>
</dbReference>
<dbReference type="Pfam" id="PF02224">
    <property type="entry name" value="Cytidylate_kin"/>
    <property type="match status" value="1"/>
</dbReference>
<dbReference type="SUPFAM" id="SSF52540">
    <property type="entry name" value="P-loop containing nucleoside triphosphate hydrolases"/>
    <property type="match status" value="1"/>
</dbReference>
<accession>Q7NBV1</accession>
<name>KCY_MYCGA</name>
<proteinExistence type="inferred from homology"/>